<evidence type="ECO:0000269" key="1">
    <source>
    </source>
</evidence>
<evidence type="ECO:0000269" key="2">
    <source>
    </source>
</evidence>
<evidence type="ECO:0000303" key="3">
    <source>
    </source>
</evidence>
<evidence type="ECO:0000305" key="4"/>
<feature type="chain" id="PRO_0000349128" description="Zinc metalloproteinase partitagin">
    <location>
        <begin position="1"/>
        <end position="19" status="greater than"/>
    </location>
</feature>
<feature type="non-terminal residue" evidence="3">
    <location>
        <position position="19"/>
    </location>
</feature>
<accession>P85975</accession>
<reference evidence="4" key="1">
    <citation type="journal article" date="2007" name="Biochimie">
        <title>'Partitagin' a hemorrhagic metalloprotease from Hippasa partita spider venom: role in tissue necrosis.</title>
        <authorList>
            <person name="Nagaraju S."/>
            <person name="Girish K.S."/>
            <person name="Fox J.W."/>
            <person name="Kemparaju K."/>
        </authorList>
    </citation>
    <scope>PROTEIN SEQUENCE</scope>
    <scope>FUNCTION</scope>
    <scope>COFACTOR</scope>
    <scope>ACTIVITY REGULATION</scope>
    <scope>BIOPHYSICOCHEMICAL PROPERTIES</scope>
    <scope>SUBCELLULAR LOCATION</scope>
    <scope>TISSUE SPECIFICITY</scope>
    <scope>MASS SPECTROMETRY</scope>
    <source>
        <tissue evidence="1">Venom</tissue>
    </source>
</reference>
<reference key="2">
    <citation type="journal article" date="2011" name="Blood Coagul. Fibrinolysis">
        <title>'Partitagin', a unique beta, gamma-fibrinogenase that inhibits platelet aggregation from Hippasa partita spider venom.</title>
        <authorList>
            <person name="Shivaiah N."/>
            <person name="Kempaiah K."/>
        </authorList>
    </citation>
    <scope>FUNCTION</scope>
    <scope>ACTIVITY REGULATION</scope>
    <scope>TOXIC DOSE</scope>
    <source>
        <tissue>Venom</tissue>
    </source>
</reference>
<dbReference type="EC" id="3.4.24.-"/>
<dbReference type="ArachnoServer" id="AS001205">
    <property type="toxin name" value="Partitagin-1-Hippasa partita"/>
</dbReference>
<dbReference type="GO" id="GO:0005576">
    <property type="term" value="C:extracellular region"/>
    <property type="evidence" value="ECO:0000314"/>
    <property type="project" value="UniProtKB"/>
</dbReference>
<dbReference type="GO" id="GO:0004222">
    <property type="term" value="F:metalloendopeptidase activity"/>
    <property type="evidence" value="ECO:0000314"/>
    <property type="project" value="UniProtKB"/>
</dbReference>
<dbReference type="GO" id="GO:0008237">
    <property type="term" value="F:metallopeptidase activity"/>
    <property type="evidence" value="ECO:0000314"/>
    <property type="project" value="UniProtKB"/>
</dbReference>
<dbReference type="GO" id="GO:0090729">
    <property type="term" value="F:toxin activity"/>
    <property type="evidence" value="ECO:0000314"/>
    <property type="project" value="UniProtKB"/>
</dbReference>
<dbReference type="GO" id="GO:0008270">
    <property type="term" value="F:zinc ion binding"/>
    <property type="evidence" value="ECO:0000314"/>
    <property type="project" value="UniProtKB"/>
</dbReference>
<dbReference type="GO" id="GO:0006508">
    <property type="term" value="P:proteolysis"/>
    <property type="evidence" value="ECO:0007669"/>
    <property type="project" value="UniProtKB-KW"/>
</dbReference>
<dbReference type="GO" id="GO:0044523">
    <property type="term" value="P:venom-mediated disruption of extracellular matrix in another organism"/>
    <property type="evidence" value="ECO:0000314"/>
    <property type="project" value="UniProtKB"/>
</dbReference>
<dbReference type="GO" id="GO:0044484">
    <property type="term" value="P:venom-mediated fibrinolysis"/>
    <property type="evidence" value="ECO:0000314"/>
    <property type="project" value="GO_Central"/>
</dbReference>
<dbReference type="GO" id="GO:0044358">
    <property type="term" value="P:venom-mediated hemorrhage in another organism"/>
    <property type="evidence" value="ECO:0000314"/>
    <property type="project" value="UniProtKB"/>
</dbReference>
<proteinExistence type="evidence at protein level"/>
<name>VMPAR_HIPPR</name>
<organism>
    <name type="scientific">Hippasa partita</name>
    <name type="common">Funnel-web spider</name>
    <name type="synonym">Hippasa deserticola</name>
    <dbReference type="NCBI Taxonomy" id="547193"/>
    <lineage>
        <taxon>Eukaryota</taxon>
        <taxon>Metazoa</taxon>
        <taxon>Ecdysozoa</taxon>
        <taxon>Arthropoda</taxon>
        <taxon>Chelicerata</taxon>
        <taxon>Arachnida</taxon>
        <taxon>Araneae</taxon>
        <taxon>Araneomorphae</taxon>
        <taxon>Entelegynae</taxon>
        <taxon>Lycosoidea</taxon>
        <taxon>Lycosidae</taxon>
        <taxon>Hippasa</taxon>
    </lineage>
</organism>
<comment type="function">
    <text evidence="1 2">Zinc metalloproteinase that causes hemorrhage in mice following intradermal injection and impairs hemostasis in its prey. In skin tissues, it degrades components of the basement membrane surrounding blood vessels and capillaries. In muscle tissue, it degrades the extracellular matrix, thus causing muscle necrosis. However, it lacks direct toxicity on myocytes. Hydrolyzes alpha-2 chain (COL4A2) of type IV collagen more slowly than the alpha-1 chain (COL4A1). Hydrolyzes fibronectin (FN1). It also impairs hemostasis by acting on fibrin(ogen) and platelets. Shows fibrinolytic activity, with a selective degradation of gamma-dimer (FGG). Shows fibrinogenolytic activity by preferentially cleaving the Bbeta chain, and later gamma-chain. Aalpha-chain remains resistant to proteolytic digestion. Weakly inhibits collagen-triggered platelet aggregation of human plasma rich platelet.</text>
</comment>
<comment type="cofactor">
    <cofactor evidence="1">
        <name>Zn(2+)</name>
        <dbReference type="ChEBI" id="CHEBI:29105"/>
    </cofactor>
    <text evidence="1">Binds 3 Zn(2+) ions per subunit.</text>
</comment>
<comment type="activity regulation">
    <text evidence="1 2">Inhibited by EDTA, 1,10-phenanthroline, cyanide, and serum alpha2-microglobulin. Not inhibited by EGTA, PMSF, leupeptin, pepstatin and aprotinin.</text>
</comment>
<comment type="biophysicochemical properties">
    <phDependence>
        <text evidence="1">Optimum pH is 7.6.</text>
    </phDependence>
    <temperatureDependence>
        <text evidence="1">Optimum temperature is 37 degrees Celsius.</text>
    </temperatureDependence>
</comment>
<comment type="subcellular location">
    <subcellularLocation>
        <location evidence="1">Secreted</location>
    </subcellularLocation>
</comment>
<comment type="tissue specificity">
    <text evidence="1">Expressed by the venom gland.</text>
</comment>
<comment type="mass spectrometry" mass="29129.0" method="MALDI" evidence="1"/>
<comment type="toxic dose">
    <text evidence="2">Dose that inhibits collagen-triggered platelet aggregation of human plasma rich platelet (IC(50)) is 1.3 mmol/l.</text>
</comment>
<comment type="similarity">
    <text evidence="4">Belongs to the venom metalloproteinase (M12B) family.</text>
</comment>
<keyword id="KW-0903">Direct protein sequencing</keyword>
<keyword id="KW-1206">Fibrinogenolytic toxin</keyword>
<keyword id="KW-1205">Fibrinolytic toxin</keyword>
<keyword id="KW-1199">Hemostasis impairing toxin</keyword>
<keyword id="KW-0378">Hydrolase</keyword>
<keyword id="KW-0479">Metal-binding</keyword>
<keyword id="KW-0482">Metalloprotease</keyword>
<keyword id="KW-1201">Platelet aggregation inhibiting toxin</keyword>
<keyword id="KW-0645">Protease</keyword>
<keyword id="KW-0964">Secreted</keyword>
<keyword id="KW-0800">Toxin</keyword>
<keyword id="KW-0862">Zinc</keyword>
<protein>
    <recommendedName>
        <fullName evidence="3">Zinc metalloproteinase partitagin</fullName>
        <ecNumber>3.4.24.-</ecNumber>
    </recommendedName>
</protein>
<sequence length="19" mass="2334">AYDPDPYKRYSAEHTFFLL</sequence>